<proteinExistence type="evidence at transcript level"/>
<sequence length="200" mass="22295">MAEPGLEGSQPVDLSKHPSGIVPTLQNIVSTVNLDCKLDLKAIALQARNAEYNPKRFAAVIMRIREPKTTALIFASGKMVCTGAKSEQQSKLAARKYARIIQKLGFPAKFKDFKIQNIVGSCDVKFPIRLEGLAYSHGAFSSYEPELFPGLIYRMKQPKIVLLIFVSGKIVLTGAKVREETYTAFENIYPVLSEFRKIQQ</sequence>
<name>TBP2_MAIZE</name>
<reference key="1">
    <citation type="journal article" date="1992" name="FEBS Lett.">
        <title>Two different cDNAs encoding TFIID proteins of maize.</title>
        <authorList>
            <person name="Haass M.M."/>
            <person name="Feix G."/>
        </authorList>
    </citation>
    <scope>NUCLEOTIDE SEQUENCE [MRNA]</scope>
</reference>
<reference key="2">
    <citation type="journal article" date="1993" name="Plant Cell">
        <title>Expression of the two maize TATA binding protein genes and function of the encoded TBP proteins by complementation in yeast.</title>
        <authorList>
            <person name="Vogel J.M."/>
            <person name="Roth B."/>
            <person name="Cigan M."/>
            <person name="Freeling M."/>
        </authorList>
    </citation>
    <scope>NUCLEOTIDE SEQUENCE [MRNA]</scope>
    <source>
        <strain>cv. B73 Inbred</strain>
        <tissue>Leaf blade</tissue>
        <tissue>Sheath</tissue>
    </source>
</reference>
<dbReference type="EMBL" id="L13302">
    <property type="protein sequence ID" value="AAA65942.1"/>
    <property type="molecule type" value="mRNA"/>
</dbReference>
<dbReference type="PIR" id="S61088">
    <property type="entry name" value="S61088"/>
</dbReference>
<dbReference type="RefSeq" id="NP_001105319.1">
    <property type="nucleotide sequence ID" value="NM_001111849.2"/>
</dbReference>
<dbReference type="SMR" id="P50159"/>
<dbReference type="FunCoup" id="P50159">
    <property type="interactions" value="2011"/>
</dbReference>
<dbReference type="STRING" id="4577.P50159"/>
<dbReference type="PaxDb" id="4577-GRMZM2G161418_P05"/>
<dbReference type="EnsemblPlants" id="Zm00001eb218190_T001">
    <property type="protein sequence ID" value="Zm00001eb218190_P001"/>
    <property type="gene ID" value="Zm00001eb218190"/>
</dbReference>
<dbReference type="GeneID" id="542241"/>
<dbReference type="Gramene" id="Zm00001eb218190_T001">
    <property type="protein sequence ID" value="Zm00001eb218190_P001"/>
    <property type="gene ID" value="Zm00001eb218190"/>
</dbReference>
<dbReference type="KEGG" id="zma:542241"/>
<dbReference type="MaizeGDB" id="25978"/>
<dbReference type="HOGENOM" id="CLU_060161_4_2_1"/>
<dbReference type="InParanoid" id="P50159"/>
<dbReference type="OMA" id="FHFKIAE"/>
<dbReference type="OrthoDB" id="728012at2759"/>
<dbReference type="Proteomes" id="UP000007305">
    <property type="component" value="Chromosome 5"/>
</dbReference>
<dbReference type="ExpressionAtlas" id="P50159">
    <property type="expression patterns" value="baseline and differential"/>
</dbReference>
<dbReference type="GO" id="GO:0005634">
    <property type="term" value="C:nucleus"/>
    <property type="evidence" value="ECO:0007669"/>
    <property type="project" value="UniProtKB-SubCell"/>
</dbReference>
<dbReference type="GO" id="GO:0003677">
    <property type="term" value="F:DNA binding"/>
    <property type="evidence" value="ECO:0007669"/>
    <property type="project" value="UniProtKB-KW"/>
</dbReference>
<dbReference type="GO" id="GO:0016251">
    <property type="term" value="F:RNA polymerase II general transcription initiation factor activity"/>
    <property type="evidence" value="ECO:0000318"/>
    <property type="project" value="GO_Central"/>
</dbReference>
<dbReference type="GO" id="GO:0006352">
    <property type="term" value="P:DNA-templated transcription initiation"/>
    <property type="evidence" value="ECO:0000318"/>
    <property type="project" value="GO_Central"/>
</dbReference>
<dbReference type="CDD" id="cd04516">
    <property type="entry name" value="TBP_eukaryotes"/>
    <property type="match status" value="1"/>
</dbReference>
<dbReference type="FunFam" id="3.30.310.10:FF:000001">
    <property type="entry name" value="TATA-box-binding protein 2"/>
    <property type="match status" value="1"/>
</dbReference>
<dbReference type="FunFam" id="3.30.310.10:FF:000002">
    <property type="entry name" value="TATA-box-binding protein 2"/>
    <property type="match status" value="1"/>
</dbReference>
<dbReference type="Gene3D" id="3.30.310.10">
    <property type="entry name" value="TATA-Binding Protein"/>
    <property type="match status" value="2"/>
</dbReference>
<dbReference type="HAMAP" id="MF_00408">
    <property type="entry name" value="TATA_bind_prot_arch"/>
    <property type="match status" value="1"/>
</dbReference>
<dbReference type="InterPro" id="IPR000814">
    <property type="entry name" value="TBP"/>
</dbReference>
<dbReference type="InterPro" id="IPR030491">
    <property type="entry name" value="TBP_CS"/>
</dbReference>
<dbReference type="InterPro" id="IPR012295">
    <property type="entry name" value="TBP_dom_sf"/>
</dbReference>
<dbReference type="InterPro" id="IPR033710">
    <property type="entry name" value="TBP_eukaryotic"/>
</dbReference>
<dbReference type="PANTHER" id="PTHR10126">
    <property type="entry name" value="TATA-BOX BINDING PROTEIN"/>
    <property type="match status" value="1"/>
</dbReference>
<dbReference type="Pfam" id="PF00352">
    <property type="entry name" value="TBP"/>
    <property type="match status" value="2"/>
</dbReference>
<dbReference type="PRINTS" id="PR00686">
    <property type="entry name" value="TIFACTORIID"/>
</dbReference>
<dbReference type="SUPFAM" id="SSF55945">
    <property type="entry name" value="TATA-box binding protein-like"/>
    <property type="match status" value="2"/>
</dbReference>
<dbReference type="PROSITE" id="PS00351">
    <property type="entry name" value="TFIID"/>
    <property type="match status" value="2"/>
</dbReference>
<gene>
    <name type="primary">TBP2</name>
</gene>
<protein>
    <recommendedName>
        <fullName>TATA-box-binding protein 2</fullName>
    </recommendedName>
    <alternativeName>
        <fullName>TATA sequence-binding protein 2</fullName>
        <shortName>TBP-2</shortName>
    </alternativeName>
    <alternativeName>
        <fullName>TATA-binding factor 2</fullName>
    </alternativeName>
    <alternativeName>
        <fullName>TATA-box factor 2</fullName>
    </alternativeName>
    <alternativeName>
        <fullName>Transcription initiation factor TFIID TBP-2 subunit</fullName>
    </alternativeName>
</protein>
<keyword id="KW-0238">DNA-binding</keyword>
<keyword id="KW-0539">Nucleus</keyword>
<keyword id="KW-1185">Reference proteome</keyword>
<keyword id="KW-0677">Repeat</keyword>
<keyword id="KW-0804">Transcription</keyword>
<evidence type="ECO:0000305" key="1"/>
<comment type="function">
    <text>General transcription factor that functions at the core of the DNA-binding multiprotein factor TFIID. Binding of TFIID to the TATA box is the initial transcriptional step of the pre-initiation complex (PIC), playing a role in the activation of eukaryotic genes transcribed by RNA polymerase II.</text>
</comment>
<comment type="subunit">
    <text>Belongs to the TFIID complex together with the TBP-associated factors (TAFs). Binds DNA as monomer.</text>
</comment>
<comment type="subcellular location">
    <subcellularLocation>
        <location>Nucleus</location>
    </subcellularLocation>
</comment>
<comment type="similarity">
    <text evidence="1">Belongs to the TBP family.</text>
</comment>
<organism>
    <name type="scientific">Zea mays</name>
    <name type="common">Maize</name>
    <dbReference type="NCBI Taxonomy" id="4577"/>
    <lineage>
        <taxon>Eukaryota</taxon>
        <taxon>Viridiplantae</taxon>
        <taxon>Streptophyta</taxon>
        <taxon>Embryophyta</taxon>
        <taxon>Tracheophyta</taxon>
        <taxon>Spermatophyta</taxon>
        <taxon>Magnoliopsida</taxon>
        <taxon>Liliopsida</taxon>
        <taxon>Poales</taxon>
        <taxon>Poaceae</taxon>
        <taxon>PACMAD clade</taxon>
        <taxon>Panicoideae</taxon>
        <taxon>Andropogonodae</taxon>
        <taxon>Andropogoneae</taxon>
        <taxon>Tripsacinae</taxon>
        <taxon>Zea</taxon>
    </lineage>
</organism>
<accession>P50159</accession>
<feature type="chain" id="PRO_0000153979" description="TATA-box-binding protein 2">
    <location>
        <begin position="1"/>
        <end position="200"/>
    </location>
</feature>
<feature type="repeat" description="1">
    <location>
        <begin position="25"/>
        <end position="101"/>
    </location>
</feature>
<feature type="repeat" description="2">
    <location>
        <begin position="115"/>
        <end position="192"/>
    </location>
</feature>